<dbReference type="EC" id="3.1.3.-" evidence="4"/>
<dbReference type="EMBL" id="AB827640">
    <property type="protein sequence ID" value="BAO45795.1"/>
    <property type="molecule type" value="mRNA"/>
</dbReference>
<dbReference type="EMBL" id="EU794677">
    <property type="protein sequence ID" value="ACJ13731.1"/>
    <property type="molecule type" value="mRNA"/>
</dbReference>
<dbReference type="EMBL" id="AY358460">
    <property type="protein sequence ID" value="AAQ88825.1"/>
    <property type="molecule type" value="mRNA"/>
</dbReference>
<dbReference type="EMBL" id="AK074331">
    <property type="protein sequence ID" value="BAB85053.1"/>
    <property type="molecule type" value="mRNA"/>
</dbReference>
<dbReference type="EMBL" id="CH471052">
    <property type="protein sequence ID" value="EAW79007.1"/>
    <property type="molecule type" value="Genomic_DNA"/>
</dbReference>
<dbReference type="EMBL" id="CH471052">
    <property type="protein sequence ID" value="EAW79009.1"/>
    <property type="molecule type" value="Genomic_DNA"/>
</dbReference>
<dbReference type="EMBL" id="BC035834">
    <property type="protein sequence ID" value="AAH35834.1"/>
    <property type="molecule type" value="mRNA"/>
</dbReference>
<dbReference type="EMBL" id="BC036701">
    <property type="protein sequence ID" value="AAH36701.1"/>
    <property type="molecule type" value="mRNA"/>
</dbReference>
<dbReference type="CCDS" id="CCDS3116.1">
    <molecule id="Q8TE99-1"/>
</dbReference>
<dbReference type="RefSeq" id="NP_001032249.1">
    <molecule id="Q8TE99-1"/>
    <property type="nucleotide sequence ID" value="NM_001037172.3"/>
</dbReference>
<dbReference type="RefSeq" id="NP_001269657.1">
    <property type="nucleotide sequence ID" value="NM_001282728.1"/>
</dbReference>
<dbReference type="RefSeq" id="NP_689495.1">
    <molecule id="Q8TE99-1"/>
    <property type="nucleotide sequence ID" value="NM_152282.5"/>
</dbReference>
<dbReference type="RefSeq" id="XP_016862999.1">
    <property type="nucleotide sequence ID" value="XM_017007510.1"/>
</dbReference>
<dbReference type="RefSeq" id="XP_047305165.1">
    <molecule id="Q8TE99-1"/>
    <property type="nucleotide sequence ID" value="XM_047449209.1"/>
</dbReference>
<dbReference type="RefSeq" id="XP_047305166.1">
    <molecule id="Q8TE99-1"/>
    <property type="nucleotide sequence ID" value="XM_047449210.1"/>
</dbReference>
<dbReference type="RefSeq" id="XP_047305167.1">
    <molecule id="Q8TE99-1"/>
    <property type="nucleotide sequence ID" value="XM_047449211.1"/>
</dbReference>
<dbReference type="RefSeq" id="XP_047305168.1">
    <molecule id="Q8TE99-1"/>
    <property type="nucleotide sequence ID" value="XM_047449212.1"/>
</dbReference>
<dbReference type="RefSeq" id="XP_047305169.1">
    <molecule id="Q8TE99-1"/>
    <property type="nucleotide sequence ID" value="XM_047449213.1"/>
</dbReference>
<dbReference type="RefSeq" id="XP_047305170.1">
    <molecule id="Q8TE99-1"/>
    <property type="nucleotide sequence ID" value="XM_047449214.1"/>
</dbReference>
<dbReference type="RefSeq" id="XP_047305171.1">
    <molecule id="Q8TE99-1"/>
    <property type="nucleotide sequence ID" value="XM_047449215.1"/>
</dbReference>
<dbReference type="RefSeq" id="XP_047305172.1">
    <molecule id="Q8TE99-1"/>
    <property type="nucleotide sequence ID" value="XM_047449216.1"/>
</dbReference>
<dbReference type="RefSeq" id="XP_047305173.1">
    <molecule id="Q8TE99-1"/>
    <property type="nucleotide sequence ID" value="XM_047449217.1"/>
</dbReference>
<dbReference type="RefSeq" id="XP_047305174.1">
    <molecule id="Q8TE99-1"/>
    <property type="nucleotide sequence ID" value="XM_047449218.1"/>
</dbReference>
<dbReference type="RefSeq" id="XP_047305175.1">
    <molecule id="Q8TE99-1"/>
    <property type="nucleotide sequence ID" value="XM_047449219.1"/>
</dbReference>
<dbReference type="RefSeq" id="XP_047305176.1">
    <molecule id="Q8TE99-1"/>
    <property type="nucleotide sequence ID" value="XM_047449220.1"/>
</dbReference>
<dbReference type="RefSeq" id="XP_047305177.1">
    <molecule id="Q8TE99-1"/>
    <property type="nucleotide sequence ID" value="XM_047449221.1"/>
</dbReference>
<dbReference type="RefSeq" id="XP_047305178.1">
    <molecule id="Q8TE99-1"/>
    <property type="nucleotide sequence ID" value="XM_047449222.1"/>
</dbReference>
<dbReference type="RefSeq" id="XP_047305179.1">
    <molecule id="Q8TE99-1"/>
    <property type="nucleotide sequence ID" value="XM_047449223.1"/>
</dbReference>
<dbReference type="RefSeq" id="XP_047305180.1">
    <molecule id="Q8TE99-1"/>
    <property type="nucleotide sequence ID" value="XM_047449224.1"/>
</dbReference>
<dbReference type="RefSeq" id="XP_047305181.1">
    <molecule id="Q8TE99-1"/>
    <property type="nucleotide sequence ID" value="XM_047449225.1"/>
</dbReference>
<dbReference type="RefSeq" id="XP_047305182.1">
    <molecule id="Q8TE99-1"/>
    <property type="nucleotide sequence ID" value="XM_047449226.1"/>
</dbReference>
<dbReference type="RefSeq" id="XP_047305183.1">
    <molecule id="Q8TE99-1"/>
    <property type="nucleotide sequence ID" value="XM_047449227.1"/>
</dbReference>
<dbReference type="RefSeq" id="XP_047305184.1">
    <molecule id="Q8TE99-1"/>
    <property type="nucleotide sequence ID" value="XM_047449228.1"/>
</dbReference>
<dbReference type="RefSeq" id="XP_047305185.1">
    <molecule id="Q8TE99-1"/>
    <property type="nucleotide sequence ID" value="XM_047449229.1"/>
</dbReference>
<dbReference type="RefSeq" id="XP_047305186.1">
    <molecule id="Q8TE99-1"/>
    <property type="nucleotide sequence ID" value="XM_047449230.1"/>
</dbReference>
<dbReference type="RefSeq" id="XP_054204390.1">
    <molecule id="Q8TE99-1"/>
    <property type="nucleotide sequence ID" value="XM_054348415.1"/>
</dbReference>
<dbReference type="RefSeq" id="XP_054204391.1">
    <molecule id="Q8TE99-1"/>
    <property type="nucleotide sequence ID" value="XM_054348416.1"/>
</dbReference>
<dbReference type="RefSeq" id="XP_054204392.1">
    <molecule id="Q8TE99-1"/>
    <property type="nucleotide sequence ID" value="XM_054348417.1"/>
</dbReference>
<dbReference type="RefSeq" id="XP_054204393.1">
    <molecule id="Q8TE99-1"/>
    <property type="nucleotide sequence ID" value="XM_054348418.1"/>
</dbReference>
<dbReference type="RefSeq" id="XP_054204394.1">
    <molecule id="Q8TE99-1"/>
    <property type="nucleotide sequence ID" value="XM_054348419.1"/>
</dbReference>
<dbReference type="RefSeq" id="XP_054204395.1">
    <molecule id="Q8TE99-1"/>
    <property type="nucleotide sequence ID" value="XM_054348420.1"/>
</dbReference>
<dbReference type="RefSeq" id="XP_054204396.1">
    <molecule id="Q8TE99-1"/>
    <property type="nucleotide sequence ID" value="XM_054348421.1"/>
</dbReference>
<dbReference type="RefSeq" id="XP_054204397.1">
    <molecule id="Q8TE99-1"/>
    <property type="nucleotide sequence ID" value="XM_054348422.1"/>
</dbReference>
<dbReference type="RefSeq" id="XP_054204398.1">
    <molecule id="Q8TE99-1"/>
    <property type="nucleotide sequence ID" value="XM_054348423.1"/>
</dbReference>
<dbReference type="RefSeq" id="XP_054204399.1">
    <molecule id="Q8TE99-1"/>
    <property type="nucleotide sequence ID" value="XM_054348424.1"/>
</dbReference>
<dbReference type="RefSeq" id="XP_054204400.1">
    <molecule id="Q8TE99-1"/>
    <property type="nucleotide sequence ID" value="XM_054348425.1"/>
</dbReference>
<dbReference type="RefSeq" id="XP_054204401.1">
    <molecule id="Q8TE99-1"/>
    <property type="nucleotide sequence ID" value="XM_054348426.1"/>
</dbReference>
<dbReference type="RefSeq" id="XP_054204402.1">
    <molecule id="Q8TE99-1"/>
    <property type="nucleotide sequence ID" value="XM_054348427.1"/>
</dbReference>
<dbReference type="RefSeq" id="XP_054204403.1">
    <molecule id="Q8TE99-1"/>
    <property type="nucleotide sequence ID" value="XM_054348428.1"/>
</dbReference>
<dbReference type="RefSeq" id="XP_054204404.1">
    <molecule id="Q8TE99-1"/>
    <property type="nucleotide sequence ID" value="XM_054348429.1"/>
</dbReference>
<dbReference type="RefSeq" id="XP_054204405.1">
    <molecule id="Q8TE99-1"/>
    <property type="nucleotide sequence ID" value="XM_054348430.1"/>
</dbReference>
<dbReference type="RefSeq" id="XP_054204406.1">
    <molecule id="Q8TE99-1"/>
    <property type="nucleotide sequence ID" value="XM_054348431.1"/>
</dbReference>
<dbReference type="RefSeq" id="XP_054204407.1">
    <molecule id="Q8TE99-1"/>
    <property type="nucleotide sequence ID" value="XM_054348432.1"/>
</dbReference>
<dbReference type="RefSeq" id="XP_054204408.1">
    <molecule id="Q8TE99-1"/>
    <property type="nucleotide sequence ID" value="XM_054348433.1"/>
</dbReference>
<dbReference type="RefSeq" id="XP_054204409.1">
    <molecule id="Q8TE99-1"/>
    <property type="nucleotide sequence ID" value="XM_054348434.1"/>
</dbReference>
<dbReference type="SMR" id="Q8TE99"/>
<dbReference type="BioGRID" id="124942">
    <property type="interactions" value="31"/>
</dbReference>
<dbReference type="FunCoup" id="Q8TE99">
    <property type="interactions" value="977"/>
</dbReference>
<dbReference type="IntAct" id="Q8TE99">
    <property type="interactions" value="25"/>
</dbReference>
<dbReference type="STRING" id="9606.ENSP00000286353"/>
<dbReference type="DEPOD" id="PXYLP1"/>
<dbReference type="GlyCosmos" id="Q8TE99">
    <property type="glycosylation" value="3 sites, 1 glycan"/>
</dbReference>
<dbReference type="GlyGen" id="Q8TE99">
    <property type="glycosylation" value="3 sites, 1 N-linked glycan (1 site), 1 O-linked glycan (1 site)"/>
</dbReference>
<dbReference type="iPTMnet" id="Q8TE99"/>
<dbReference type="PhosphoSitePlus" id="Q8TE99"/>
<dbReference type="BioMuta" id="PXYLP1"/>
<dbReference type="DMDM" id="74730610"/>
<dbReference type="jPOST" id="Q8TE99"/>
<dbReference type="MassIVE" id="Q8TE99"/>
<dbReference type="PaxDb" id="9606-ENSP00000286353"/>
<dbReference type="PeptideAtlas" id="Q8TE99"/>
<dbReference type="ProteomicsDB" id="74427">
    <molecule id="Q8TE99-1"/>
</dbReference>
<dbReference type="ProteomicsDB" id="74428">
    <molecule id="Q8TE99-2"/>
</dbReference>
<dbReference type="Pumba" id="Q8TE99"/>
<dbReference type="Antibodypedia" id="2523">
    <property type="antibodies" value="133 antibodies from 21 providers"/>
</dbReference>
<dbReference type="DNASU" id="92370"/>
<dbReference type="Ensembl" id="ENST00000286353.9">
    <molecule id="Q8TE99-1"/>
    <property type="protein sequence ID" value="ENSP00000286353.4"/>
    <property type="gene ID" value="ENSG00000155893.13"/>
</dbReference>
<dbReference type="Ensembl" id="ENST00000393010.6">
    <molecule id="Q8TE99-1"/>
    <property type="protein sequence ID" value="ENSP00000376733.2"/>
    <property type="gene ID" value="ENSG00000155893.13"/>
</dbReference>
<dbReference type="GeneID" id="92370"/>
<dbReference type="KEGG" id="hsa:92370"/>
<dbReference type="MANE-Select" id="ENST00000286353.9">
    <property type="protein sequence ID" value="ENSP00000286353.4"/>
    <property type="RefSeq nucleotide sequence ID" value="NM_001037172.3"/>
    <property type="RefSeq protein sequence ID" value="NP_001032249.1"/>
</dbReference>
<dbReference type="UCSC" id="uc003etu.5">
    <molecule id="Q8TE99-1"/>
    <property type="organism name" value="human"/>
</dbReference>
<dbReference type="AGR" id="HGNC:26303"/>
<dbReference type="CTD" id="92370"/>
<dbReference type="DisGeNET" id="92370"/>
<dbReference type="GeneCards" id="PXYLP1"/>
<dbReference type="HGNC" id="HGNC:26303">
    <property type="gene designation" value="PXYLP1"/>
</dbReference>
<dbReference type="HPA" id="ENSG00000155893">
    <property type="expression patterns" value="Tissue enhanced (epididymis)"/>
</dbReference>
<dbReference type="MIM" id="619732">
    <property type="type" value="gene"/>
</dbReference>
<dbReference type="neXtProt" id="NX_Q8TE99"/>
<dbReference type="OpenTargets" id="ENSG00000155893"/>
<dbReference type="PharmGKB" id="PA134964387"/>
<dbReference type="VEuPathDB" id="HostDB:ENSG00000155893"/>
<dbReference type="eggNOG" id="KOG3672">
    <property type="taxonomic scope" value="Eukaryota"/>
</dbReference>
<dbReference type="GeneTree" id="ENSGT00390000016324"/>
<dbReference type="InParanoid" id="Q8TE99"/>
<dbReference type="OMA" id="DWEWNYY"/>
<dbReference type="OrthoDB" id="10262962at2759"/>
<dbReference type="PAN-GO" id="Q8TE99">
    <property type="GO annotations" value="5 GO annotations based on evolutionary models"/>
</dbReference>
<dbReference type="PhylomeDB" id="Q8TE99"/>
<dbReference type="TreeFam" id="TF318821"/>
<dbReference type="PathwayCommons" id="Q8TE99"/>
<dbReference type="SignaLink" id="Q8TE99"/>
<dbReference type="BioGRID-ORCS" id="92370">
    <property type="hits" value="12 hits in 1156 CRISPR screens"/>
</dbReference>
<dbReference type="ChiTaRS" id="PXYLP1">
    <property type="organism name" value="human"/>
</dbReference>
<dbReference type="GenomeRNAi" id="92370"/>
<dbReference type="Pharos" id="Q8TE99">
    <property type="development level" value="Tbio"/>
</dbReference>
<dbReference type="PRO" id="PR:Q8TE99"/>
<dbReference type="Proteomes" id="UP000005640">
    <property type="component" value="Chromosome 3"/>
</dbReference>
<dbReference type="RNAct" id="Q8TE99">
    <property type="molecule type" value="protein"/>
</dbReference>
<dbReference type="Bgee" id="ENSG00000155893">
    <property type="expression patterns" value="Expressed in corpus epididymis and 186 other cell types or tissues"/>
</dbReference>
<dbReference type="ExpressionAtlas" id="Q8TE99">
    <property type="expression patterns" value="baseline and differential"/>
</dbReference>
<dbReference type="GO" id="GO:0005794">
    <property type="term" value="C:Golgi apparatus"/>
    <property type="evidence" value="ECO:0000314"/>
    <property type="project" value="UniProtKB"/>
</dbReference>
<dbReference type="GO" id="GO:0000139">
    <property type="term" value="C:Golgi membrane"/>
    <property type="evidence" value="ECO:0007669"/>
    <property type="project" value="UniProtKB-SubCell"/>
</dbReference>
<dbReference type="GO" id="GO:0016791">
    <property type="term" value="F:phosphatase activity"/>
    <property type="evidence" value="ECO:0000314"/>
    <property type="project" value="UniProtKB"/>
</dbReference>
<dbReference type="GO" id="GO:0050650">
    <property type="term" value="P:chondroitin sulfate proteoglycan biosynthetic process"/>
    <property type="evidence" value="ECO:0000315"/>
    <property type="project" value="UniProtKB"/>
</dbReference>
<dbReference type="GO" id="GO:0006024">
    <property type="term" value="P:glycosaminoglycan biosynthetic process"/>
    <property type="evidence" value="ECO:0000314"/>
    <property type="project" value="UniProtKB"/>
</dbReference>
<dbReference type="GO" id="GO:0010909">
    <property type="term" value="P:positive regulation of heparan sulfate proteoglycan biosynthetic process"/>
    <property type="evidence" value="ECO:0000315"/>
    <property type="project" value="UniProtKB"/>
</dbReference>
<dbReference type="CDD" id="cd07061">
    <property type="entry name" value="HP_HAP_like"/>
    <property type="match status" value="1"/>
</dbReference>
<dbReference type="FunFam" id="3.40.50.1240:FF:000011">
    <property type="entry name" value="2-phosphoxylose phosphatase 1"/>
    <property type="match status" value="1"/>
</dbReference>
<dbReference type="Gene3D" id="3.40.50.1240">
    <property type="entry name" value="Phosphoglycerate mutase-like"/>
    <property type="match status" value="1"/>
</dbReference>
<dbReference type="InterPro" id="IPR000560">
    <property type="entry name" value="His_Pase_clade-2"/>
</dbReference>
<dbReference type="InterPro" id="IPR029033">
    <property type="entry name" value="His_PPase_superfam"/>
</dbReference>
<dbReference type="InterPro" id="IPR050645">
    <property type="entry name" value="Histidine_acid_phosphatase"/>
</dbReference>
<dbReference type="PANTHER" id="PTHR11567:SF110">
    <property type="entry name" value="2-PHOSPHOXYLOSE PHOSPHATASE 1"/>
    <property type="match status" value="1"/>
</dbReference>
<dbReference type="PANTHER" id="PTHR11567">
    <property type="entry name" value="ACID PHOSPHATASE-RELATED"/>
    <property type="match status" value="1"/>
</dbReference>
<dbReference type="Pfam" id="PF00328">
    <property type="entry name" value="His_Phos_2"/>
    <property type="match status" value="1"/>
</dbReference>
<dbReference type="SUPFAM" id="SSF53254">
    <property type="entry name" value="Phosphoglycerate mutase-like"/>
    <property type="match status" value="1"/>
</dbReference>
<comment type="function">
    <text evidence="4">Responsible for the 2-O-dephosphorylation of xylose in the glycosaminoglycan-protein linkage region of proteoglycans thereby regulating the amount of mature glycosaminoglycan (GAG) chains. Sulfated glycosaminoglycans (GAGs), including heparan sulfate and chondroitin sulfate, are synthesized on the so-called common GAG-protein linkage region (GlcUAbeta1-3Galbeta1-3Galbeta1-4Xylbeta1-O-Ser) of core proteins, which is formed by the stepwise addition of monosaccharide residues by the respective specific glycosyltransferases. Xylose 2-O-dephosphorylation during completion of linkage region formation is a prerequisite for the initiation and efficient elongation of the repeating disaccharide region of GAG chains.</text>
</comment>
<comment type="catalytic activity">
    <reaction evidence="4">
        <text>3-O-[beta-D-GlcA-(1-&gt;3)-beta-D-Gal-(1-&gt;3)-beta-D-Gal-(1-&gt;4)-beta-D-2-O-P-Xyl]-L-seryl-[protein] + H2O = 3-O-(beta-D-GlcA-(1-&gt;3)-beta-D-Gal-(1-&gt;3)-beta-D-Gal-(1-&gt;4)-beta-D-Xyl)-L-seryl-[protein] + phosphate</text>
        <dbReference type="Rhea" id="RHEA:56512"/>
        <dbReference type="Rhea" id="RHEA-COMP:12573"/>
        <dbReference type="Rhea" id="RHEA-COMP:14559"/>
        <dbReference type="ChEBI" id="CHEBI:15377"/>
        <dbReference type="ChEBI" id="CHEBI:43474"/>
        <dbReference type="ChEBI" id="CHEBI:132093"/>
        <dbReference type="ChEBI" id="CHEBI:140495"/>
    </reaction>
</comment>
<comment type="biophysicochemical properties">
    <phDependence>
        <text evidence="4">Optimum pH is 5.8.</text>
    </phDependence>
</comment>
<comment type="subunit">
    <text evidence="4">Interacts with B3GAT3; the interaction increases the 2-phosphoxylose phosphatase activity of PXYLP1 during completion of linkage region formation in a B3GAT3-mediated manner.</text>
</comment>
<comment type="interaction">
    <interactant intactId="EBI-53949969">
        <id>Q8TE99</id>
    </interactant>
    <interactant intactId="EBI-6871081">
        <id>O60503</id>
        <label>ADCY9</label>
    </interactant>
    <organismsDiffer>false</organismsDiffer>
    <experiments>3</experiments>
</comment>
<comment type="subcellular location">
    <subcellularLocation>
        <location evidence="4">Golgi apparatus membrane</location>
        <topology evidence="2">Single-pass type II membrane protein</topology>
    </subcellularLocation>
    <text evidence="4">Colocalizes to Golgi apparatus in a B3GAT3-dependent manner.</text>
</comment>
<comment type="alternative products">
    <event type="alternative splicing"/>
    <isoform>
        <id>Q8TE99-1</id>
        <name>1</name>
        <sequence type="displayed"/>
    </isoform>
    <isoform>
        <id>Q8TE99-2</id>
        <name>2</name>
        <sequence type="described" ref="VSP_030432"/>
    </isoform>
</comment>
<comment type="tissue specificity">
    <text evidence="4">Widely expressed. Strongly expressed in spleen, fetal liver, moderately in placenta, pancreas, kidney, thymus and colon.</text>
</comment>
<comment type="similarity">
    <text evidence="8">Belongs to the histidine acid phosphatase family.</text>
</comment>
<gene>
    <name evidence="11" type="primary">PXYLP1</name>
    <name type="synonym">ACPL2</name>
    <name evidence="7 9" type="synonym">HEL124</name>
    <name evidence="6" type="synonym">XYLP</name>
    <name type="ORF">UNQ370/PRO706</name>
</gene>
<protein>
    <recommendedName>
        <fullName evidence="6">2-phosphoxylose phosphatase 1</fullName>
        <ecNumber evidence="4">3.1.3.-</ecNumber>
    </recommendedName>
    <alternativeName>
        <fullName>Acid phosphatase-like protein 2</fullName>
    </alternativeName>
    <alternativeName>
        <fullName evidence="6 10">Xylosyl phosphatase</fullName>
    </alternativeName>
    <alternativeName>
        <fullName evidence="7 9">epididymis luminal protein 124</fullName>
    </alternativeName>
</protein>
<organism>
    <name type="scientific">Homo sapiens</name>
    <name type="common">Human</name>
    <dbReference type="NCBI Taxonomy" id="9606"/>
    <lineage>
        <taxon>Eukaryota</taxon>
        <taxon>Metazoa</taxon>
        <taxon>Chordata</taxon>
        <taxon>Craniata</taxon>
        <taxon>Vertebrata</taxon>
        <taxon>Euteleostomi</taxon>
        <taxon>Mammalia</taxon>
        <taxon>Eutheria</taxon>
        <taxon>Euarchontoglires</taxon>
        <taxon>Primates</taxon>
        <taxon>Haplorrhini</taxon>
        <taxon>Catarrhini</taxon>
        <taxon>Hominidae</taxon>
        <taxon>Homo</taxon>
    </lineage>
</organism>
<proteinExistence type="evidence at protein level"/>
<sequence>MLFRNRFLLLLALAALLAFVSLSLQFFHLIPVSTPKNGMSSKSRKRIMPDPVTEPPVTDPVYEALLYCNIPSVAERSMEGHAPHHFKLVSVHVFIRHGDRYPLYVIPKTKRPEIDCTLVANRKPYHPKLEAFISHMSKGSGASFESPLNSLPLYPNHPLCEMGELTQTGVVQHLQNGQLLRDIYLKKHKLLPNDWSADQLYLETTGKSRTLQSGLALLYGFLPDFDWKKIYFRHQPSALFCSGSCYCPVRNQYLEKEQRRQYLLRLKNSQLEKTYGEMAKIVDVPTKQLRAANPIDSMLCHFCHNVSFPCTRNGCVDMEHFKVIKTHQIEDERERREKKLYFGYSLLGAHPILNQTIGRMQRATEGRKEELFALYSAHDVTLSPVLSALGLSEARFPRFAARLIFELWQDREKPSEHSVRILYNGVDVTFHTSFCQDHHKRSPKPMCPLENLVRFVKRDMFVALGGSGTNYYDACHREGF</sequence>
<accession>Q8TE99</accession>
<accession>D3DNF5</accession>
<accession>Q49AJ2</accession>
<accession>W0TR04</accession>
<keyword id="KW-0025">Alternative splicing</keyword>
<keyword id="KW-0325">Glycoprotein</keyword>
<keyword id="KW-0333">Golgi apparatus</keyword>
<keyword id="KW-0378">Hydrolase</keyword>
<keyword id="KW-0472">Membrane</keyword>
<keyword id="KW-1267">Proteomics identification</keyword>
<keyword id="KW-1185">Reference proteome</keyword>
<keyword id="KW-0735">Signal-anchor</keyword>
<keyword id="KW-0812">Transmembrane</keyword>
<keyword id="KW-1133">Transmembrane helix</keyword>
<evidence type="ECO:0000250" key="1"/>
<evidence type="ECO:0000255" key="2"/>
<evidence type="ECO:0000255" key="3">
    <source>
        <dbReference type="PROSITE-ProRule" id="PRU00498"/>
    </source>
</evidence>
<evidence type="ECO:0000269" key="4">
    <source>
    </source>
</evidence>
<evidence type="ECO:0000303" key="5">
    <source>
    </source>
</evidence>
<evidence type="ECO:0000303" key="6">
    <source>
    </source>
</evidence>
<evidence type="ECO:0000303" key="7">
    <source ref="2"/>
</evidence>
<evidence type="ECO:0000305" key="8"/>
<evidence type="ECO:0000312" key="9">
    <source>
        <dbReference type="EMBL" id="ACJ13731.1"/>
    </source>
</evidence>
<evidence type="ECO:0000312" key="10">
    <source>
        <dbReference type="EMBL" id="BAO45795.1"/>
    </source>
</evidence>
<evidence type="ECO:0000312" key="11">
    <source>
        <dbReference type="HGNC" id="HGNC:26303"/>
    </source>
</evidence>
<feature type="chain" id="PRO_0000314924" description="2-phosphoxylose phosphatase 1">
    <location>
        <begin position="1"/>
        <end position="480"/>
    </location>
</feature>
<feature type="topological domain" description="Cytoplasmic" evidence="2">
    <location>
        <begin position="1"/>
        <end position="6"/>
    </location>
</feature>
<feature type="transmembrane region" description="Helical; Signal-anchor for type II membrane protein" evidence="2">
    <location>
        <begin position="7"/>
        <end position="27"/>
    </location>
</feature>
<feature type="topological domain" description="Lumenal" evidence="2">
    <location>
        <begin position="28"/>
        <end position="480"/>
    </location>
</feature>
<feature type="active site" description="Nucleophile" evidence="1">
    <location>
        <position position="97"/>
    </location>
</feature>
<feature type="active site" description="Proton donor" evidence="1">
    <location>
        <position position="379"/>
    </location>
</feature>
<feature type="glycosylation site" description="N-linked (GlcNAc...) asparagine" evidence="2">
    <location>
        <position position="305"/>
    </location>
</feature>
<feature type="glycosylation site" description="N-linked (GlcNAc...) asparagine" evidence="3">
    <location>
        <position position="354"/>
    </location>
</feature>
<feature type="splice variant" id="VSP_030432" description="In isoform 2." evidence="5">
    <original>MLFRNRFLLLLALAALLAFVSLSLQFF</original>
    <variation>MEHSVCPSSAV</variation>
    <location>
        <begin position="1"/>
        <end position="27"/>
    </location>
</feature>
<reference key="1">
    <citation type="journal article" date="2014" name="J. Biol. Chem.">
        <title>Identification of phosphatase that dephosphorylates xylose in the glycosaminoglycan-protein linkage region of proteoglycans.</title>
        <authorList>
            <person name="Koike T."/>
            <person name="Izumikawa T."/>
            <person name="Sato B."/>
            <person name="Kitagawa H."/>
        </authorList>
    </citation>
    <scope>NUCLEOTIDE SEQUENCE [MRNA]</scope>
    <scope>FUNCTION</scope>
    <scope>CATALYTIC ACTIVITY</scope>
    <scope>BIOPHYSICOCHEMICAL PROPERTIES</scope>
    <scope>INTERACTION WITH B3GAT3</scope>
    <scope>SUBCELLULAR LOCATION</scope>
    <scope>TISSUE SPECIFICITY</scope>
    <source>
        <tissue evidence="10">Ovary</tissue>
    </source>
</reference>
<reference key="2">
    <citation type="submission" date="2008-06" db="EMBL/GenBank/DDBJ databases">
        <authorList>
            <person name="Li J.Y."/>
            <person name="Wang H.Y."/>
            <person name="Liu F.J."/>
            <person name="Liu J."/>
        </authorList>
    </citation>
    <scope>NUCLEOTIDE SEQUENCE [MRNA]</scope>
</reference>
<reference key="3">
    <citation type="journal article" date="2003" name="Genome Res.">
        <title>The secreted protein discovery initiative (SPDI), a large-scale effort to identify novel human secreted and transmembrane proteins: a bioinformatics assessment.</title>
        <authorList>
            <person name="Clark H.F."/>
            <person name="Gurney A.L."/>
            <person name="Abaya E."/>
            <person name="Baker K."/>
            <person name="Baldwin D.T."/>
            <person name="Brush J."/>
            <person name="Chen J."/>
            <person name="Chow B."/>
            <person name="Chui C."/>
            <person name="Crowley C."/>
            <person name="Currell B."/>
            <person name="Deuel B."/>
            <person name="Dowd P."/>
            <person name="Eaton D."/>
            <person name="Foster J.S."/>
            <person name="Grimaldi C."/>
            <person name="Gu Q."/>
            <person name="Hass P.E."/>
            <person name="Heldens S."/>
            <person name="Huang A."/>
            <person name="Kim H.S."/>
            <person name="Klimowski L."/>
            <person name="Jin Y."/>
            <person name="Johnson S."/>
            <person name="Lee J."/>
            <person name="Lewis L."/>
            <person name="Liao D."/>
            <person name="Mark M.R."/>
            <person name="Robbie E."/>
            <person name="Sanchez C."/>
            <person name="Schoenfeld J."/>
            <person name="Seshagiri S."/>
            <person name="Simmons L."/>
            <person name="Singh J."/>
            <person name="Smith V."/>
            <person name="Stinson J."/>
            <person name="Vagts A."/>
            <person name="Vandlen R.L."/>
            <person name="Watanabe C."/>
            <person name="Wieand D."/>
            <person name="Woods K."/>
            <person name="Xie M.-H."/>
            <person name="Yansura D.G."/>
            <person name="Yi S."/>
            <person name="Yu G."/>
            <person name="Yuan J."/>
            <person name="Zhang M."/>
            <person name="Zhang Z."/>
            <person name="Goddard A.D."/>
            <person name="Wood W.I."/>
            <person name="Godowski P.J."/>
            <person name="Gray A.M."/>
        </authorList>
    </citation>
    <scope>NUCLEOTIDE SEQUENCE [LARGE SCALE MRNA] (ISOFORM 1)</scope>
</reference>
<reference key="4">
    <citation type="journal article" date="2004" name="Nat. Genet.">
        <title>Complete sequencing and characterization of 21,243 full-length human cDNAs.</title>
        <authorList>
            <person name="Ota T."/>
            <person name="Suzuki Y."/>
            <person name="Nishikawa T."/>
            <person name="Otsuki T."/>
            <person name="Sugiyama T."/>
            <person name="Irie R."/>
            <person name="Wakamatsu A."/>
            <person name="Hayashi K."/>
            <person name="Sato H."/>
            <person name="Nagai K."/>
            <person name="Kimura K."/>
            <person name="Makita H."/>
            <person name="Sekine M."/>
            <person name="Obayashi M."/>
            <person name="Nishi T."/>
            <person name="Shibahara T."/>
            <person name="Tanaka T."/>
            <person name="Ishii S."/>
            <person name="Yamamoto J."/>
            <person name="Saito K."/>
            <person name="Kawai Y."/>
            <person name="Isono Y."/>
            <person name="Nakamura Y."/>
            <person name="Nagahari K."/>
            <person name="Murakami K."/>
            <person name="Yasuda T."/>
            <person name="Iwayanagi T."/>
            <person name="Wagatsuma M."/>
            <person name="Shiratori A."/>
            <person name="Sudo H."/>
            <person name="Hosoiri T."/>
            <person name="Kaku Y."/>
            <person name="Kodaira H."/>
            <person name="Kondo H."/>
            <person name="Sugawara M."/>
            <person name="Takahashi M."/>
            <person name="Kanda K."/>
            <person name="Yokoi T."/>
            <person name="Furuya T."/>
            <person name="Kikkawa E."/>
            <person name="Omura Y."/>
            <person name="Abe K."/>
            <person name="Kamihara K."/>
            <person name="Katsuta N."/>
            <person name="Sato K."/>
            <person name="Tanikawa M."/>
            <person name="Yamazaki M."/>
            <person name="Ninomiya K."/>
            <person name="Ishibashi T."/>
            <person name="Yamashita H."/>
            <person name="Murakawa K."/>
            <person name="Fujimori K."/>
            <person name="Tanai H."/>
            <person name="Kimata M."/>
            <person name="Watanabe M."/>
            <person name="Hiraoka S."/>
            <person name="Chiba Y."/>
            <person name="Ishida S."/>
            <person name="Ono Y."/>
            <person name="Takiguchi S."/>
            <person name="Watanabe S."/>
            <person name="Yosida M."/>
            <person name="Hotuta T."/>
            <person name="Kusano J."/>
            <person name="Kanehori K."/>
            <person name="Takahashi-Fujii A."/>
            <person name="Hara H."/>
            <person name="Tanase T.-O."/>
            <person name="Nomura Y."/>
            <person name="Togiya S."/>
            <person name="Komai F."/>
            <person name="Hara R."/>
            <person name="Takeuchi K."/>
            <person name="Arita M."/>
            <person name="Imose N."/>
            <person name="Musashino K."/>
            <person name="Yuuki H."/>
            <person name="Oshima A."/>
            <person name="Sasaki N."/>
            <person name="Aotsuka S."/>
            <person name="Yoshikawa Y."/>
            <person name="Matsunawa H."/>
            <person name="Ichihara T."/>
            <person name="Shiohata N."/>
            <person name="Sano S."/>
            <person name="Moriya S."/>
            <person name="Momiyama H."/>
            <person name="Satoh N."/>
            <person name="Takami S."/>
            <person name="Terashima Y."/>
            <person name="Suzuki O."/>
            <person name="Nakagawa S."/>
            <person name="Senoh A."/>
            <person name="Mizoguchi H."/>
            <person name="Goto Y."/>
            <person name="Shimizu F."/>
            <person name="Wakebe H."/>
            <person name="Hishigaki H."/>
            <person name="Watanabe T."/>
            <person name="Sugiyama A."/>
            <person name="Takemoto M."/>
            <person name="Kawakami B."/>
            <person name="Yamazaki M."/>
            <person name="Watanabe K."/>
            <person name="Kumagai A."/>
            <person name="Itakura S."/>
            <person name="Fukuzumi Y."/>
            <person name="Fujimori Y."/>
            <person name="Komiyama M."/>
            <person name="Tashiro H."/>
            <person name="Tanigami A."/>
            <person name="Fujiwara T."/>
            <person name="Ono T."/>
            <person name="Yamada K."/>
            <person name="Fujii Y."/>
            <person name="Ozaki K."/>
            <person name="Hirao M."/>
            <person name="Ohmori Y."/>
            <person name="Kawabata A."/>
            <person name="Hikiji T."/>
            <person name="Kobatake N."/>
            <person name="Inagaki H."/>
            <person name="Ikema Y."/>
            <person name="Okamoto S."/>
            <person name="Okitani R."/>
            <person name="Kawakami T."/>
            <person name="Noguchi S."/>
            <person name="Itoh T."/>
            <person name="Shigeta K."/>
            <person name="Senba T."/>
            <person name="Matsumura K."/>
            <person name="Nakajima Y."/>
            <person name="Mizuno T."/>
            <person name="Morinaga M."/>
            <person name="Sasaki M."/>
            <person name="Togashi T."/>
            <person name="Oyama M."/>
            <person name="Hata H."/>
            <person name="Watanabe M."/>
            <person name="Komatsu T."/>
            <person name="Mizushima-Sugano J."/>
            <person name="Satoh T."/>
            <person name="Shirai Y."/>
            <person name="Takahashi Y."/>
            <person name="Nakagawa K."/>
            <person name="Okumura K."/>
            <person name="Nagase T."/>
            <person name="Nomura N."/>
            <person name="Kikuchi H."/>
            <person name="Masuho Y."/>
            <person name="Yamashita R."/>
            <person name="Nakai K."/>
            <person name="Yada T."/>
            <person name="Nakamura Y."/>
            <person name="Ohara O."/>
            <person name="Isogai T."/>
            <person name="Sugano S."/>
        </authorList>
    </citation>
    <scope>NUCLEOTIDE SEQUENCE [LARGE SCALE MRNA] (ISOFORM 1)</scope>
    <source>
        <tissue>Hepatoma</tissue>
    </source>
</reference>
<reference key="5">
    <citation type="submission" date="2005-09" db="EMBL/GenBank/DDBJ databases">
        <authorList>
            <person name="Mural R.J."/>
            <person name="Istrail S."/>
            <person name="Sutton G.G."/>
            <person name="Florea L."/>
            <person name="Halpern A.L."/>
            <person name="Mobarry C.M."/>
            <person name="Lippert R."/>
            <person name="Walenz B."/>
            <person name="Shatkay H."/>
            <person name="Dew I."/>
            <person name="Miller J.R."/>
            <person name="Flanigan M.J."/>
            <person name="Edwards N.J."/>
            <person name="Bolanos R."/>
            <person name="Fasulo D."/>
            <person name="Halldorsson B.V."/>
            <person name="Hannenhalli S."/>
            <person name="Turner R."/>
            <person name="Yooseph S."/>
            <person name="Lu F."/>
            <person name="Nusskern D.R."/>
            <person name="Shue B.C."/>
            <person name="Zheng X.H."/>
            <person name="Zhong F."/>
            <person name="Delcher A.L."/>
            <person name="Huson D.H."/>
            <person name="Kravitz S.A."/>
            <person name="Mouchard L."/>
            <person name="Reinert K."/>
            <person name="Remington K.A."/>
            <person name="Clark A.G."/>
            <person name="Waterman M.S."/>
            <person name="Eichler E.E."/>
            <person name="Adams M.D."/>
            <person name="Hunkapiller M.W."/>
            <person name="Myers E.W."/>
            <person name="Venter J.C."/>
        </authorList>
    </citation>
    <scope>NUCLEOTIDE SEQUENCE [LARGE SCALE GENOMIC DNA]</scope>
</reference>
<reference key="6">
    <citation type="journal article" date="2004" name="Genome Res.">
        <title>The status, quality, and expansion of the NIH full-length cDNA project: the Mammalian Gene Collection (MGC).</title>
        <authorList>
            <consortium name="The MGC Project Team"/>
        </authorList>
    </citation>
    <scope>NUCLEOTIDE SEQUENCE [LARGE SCALE MRNA] (ISOFORMS 1 AND 2)</scope>
    <source>
        <tissue>Ovary</tissue>
        <tissue>Testis</tissue>
    </source>
</reference>
<name>PXYP1_HUMAN</name>